<protein>
    <recommendedName>
        <fullName>Tumor protein D53</fullName>
        <shortName>mD53</shortName>
    </recommendedName>
    <alternativeName>
        <fullName>Tumor protein D52-like 1</fullName>
    </alternativeName>
</protein>
<organism>
    <name type="scientific">Mus musculus</name>
    <name type="common">Mouse</name>
    <dbReference type="NCBI Taxonomy" id="10090"/>
    <lineage>
        <taxon>Eukaryota</taxon>
        <taxon>Metazoa</taxon>
        <taxon>Chordata</taxon>
        <taxon>Craniata</taxon>
        <taxon>Vertebrata</taxon>
        <taxon>Euteleostomi</taxon>
        <taxon>Mammalia</taxon>
        <taxon>Eutheria</taxon>
        <taxon>Euarchontoglires</taxon>
        <taxon>Glires</taxon>
        <taxon>Rodentia</taxon>
        <taxon>Myomorpha</taxon>
        <taxon>Muroidea</taxon>
        <taxon>Muridae</taxon>
        <taxon>Murinae</taxon>
        <taxon>Mus</taxon>
        <taxon>Mus</taxon>
    </lineage>
</organism>
<evidence type="ECO:0000250" key="1"/>
<evidence type="ECO:0000250" key="2">
    <source>
        <dbReference type="UniProtKB" id="Q16890"/>
    </source>
</evidence>
<evidence type="ECO:0000255" key="3"/>
<evidence type="ECO:0000256" key="4">
    <source>
        <dbReference type="SAM" id="MobiDB-lite"/>
    </source>
</evidence>
<evidence type="ECO:0000305" key="5"/>
<reference key="1">
    <citation type="journal article" date="1996" name="Genomics">
        <title>Definition of the tumor protein D52 (TPD52) gene family through cloning of D52 homologues in human (hD53) and mouse (mD52).</title>
        <authorList>
            <person name="Byrne J.A."/>
            <person name="Mattei M.-G."/>
            <person name="Basset P."/>
        </authorList>
    </citation>
    <scope>NUCLEOTIDE SEQUENCE [MRNA]</scope>
</reference>
<reference key="2">
    <citation type="journal article" date="2010" name="Cell">
        <title>A tissue-specific atlas of mouse protein phosphorylation and expression.</title>
        <authorList>
            <person name="Huttlin E.L."/>
            <person name="Jedrychowski M.P."/>
            <person name="Elias J.E."/>
            <person name="Goswami T."/>
            <person name="Rad R."/>
            <person name="Beausoleil S.A."/>
            <person name="Villen J."/>
            <person name="Haas W."/>
            <person name="Sowa M.E."/>
            <person name="Gygi S.P."/>
        </authorList>
    </citation>
    <scope>IDENTIFICATION BY MASS SPECTROMETRY [LARGE SCALE ANALYSIS]</scope>
    <source>
        <tissue>Brain</tissue>
        <tissue>Testis</tissue>
    </source>
</reference>
<gene>
    <name type="primary">Tpd52l1</name>
</gene>
<name>TPD53_MOUSE</name>
<accession>O54818</accession>
<proteinExistence type="evidence at protein level"/>
<comment type="subunit">
    <text evidence="1">Forms a homodimer or heterodimer with other members of the family.</text>
</comment>
<comment type="similarity">
    <text evidence="5">Belongs to the TPD52 family.</text>
</comment>
<sequence length="204" mass="22515">MEAQAQGLLETEPLQGRDGDAVGSADFSSMLSEEEKEELKAELIQLEDEITTLRQVLSAKERHLVEIKQKLGMNLMNELKQNFSRSWHDMQTTTAYKKTHETLSHAGQKATAAFNNVGTAISKKFGDMRYSIRHSISMPAMRNSSTFKSFEERVETTVASLKTKVGGTNHGGGSFEEVLNSTAHASSQNASAGSRQTKDEELQC</sequence>
<dbReference type="EMBL" id="AF004428">
    <property type="protein sequence ID" value="AAC98476.1"/>
    <property type="molecule type" value="mRNA"/>
</dbReference>
<dbReference type="CCDS" id="CCDS35877.1"/>
<dbReference type="RefSeq" id="NP_033439.1">
    <property type="nucleotide sequence ID" value="NM_009413.3"/>
</dbReference>
<dbReference type="SMR" id="O54818"/>
<dbReference type="FunCoup" id="O54818">
    <property type="interactions" value="1001"/>
</dbReference>
<dbReference type="STRING" id="10090.ENSMUSP00000000305"/>
<dbReference type="GlyGen" id="O54818">
    <property type="glycosylation" value="1 site, 1 O-linked glycan (1 site)"/>
</dbReference>
<dbReference type="iPTMnet" id="O54818"/>
<dbReference type="PhosphoSitePlus" id="O54818"/>
<dbReference type="PaxDb" id="10090-ENSMUSP00000000305"/>
<dbReference type="ProteomicsDB" id="297504"/>
<dbReference type="Antibodypedia" id="32681">
    <property type="antibodies" value="247 antibodies from 34 providers"/>
</dbReference>
<dbReference type="DNASU" id="21987"/>
<dbReference type="Ensembl" id="ENSMUST00000000305.7">
    <property type="protein sequence ID" value="ENSMUSP00000000305.6"/>
    <property type="gene ID" value="ENSMUSG00000000296.9"/>
</dbReference>
<dbReference type="GeneID" id="21987"/>
<dbReference type="KEGG" id="mmu:21987"/>
<dbReference type="UCSC" id="uc007ets.1">
    <property type="organism name" value="mouse"/>
</dbReference>
<dbReference type="AGR" id="MGI:1298386"/>
<dbReference type="CTD" id="7164"/>
<dbReference type="MGI" id="MGI:1298386">
    <property type="gene designation" value="Tpd52l1"/>
</dbReference>
<dbReference type="VEuPathDB" id="HostDB:ENSMUSG00000000296"/>
<dbReference type="eggNOG" id="KOG4010">
    <property type="taxonomic scope" value="Eukaryota"/>
</dbReference>
<dbReference type="GeneTree" id="ENSGT00940000159202"/>
<dbReference type="HOGENOM" id="CLU_080743_0_0_1"/>
<dbReference type="InParanoid" id="O54818"/>
<dbReference type="PhylomeDB" id="O54818"/>
<dbReference type="TreeFam" id="TF317562"/>
<dbReference type="Reactome" id="R-MMU-432722">
    <property type="pathway name" value="Golgi Associated Vesicle Biogenesis"/>
</dbReference>
<dbReference type="BioGRID-ORCS" id="21987">
    <property type="hits" value="1 hit in 78 CRISPR screens"/>
</dbReference>
<dbReference type="ChiTaRS" id="Tpd52l1">
    <property type="organism name" value="mouse"/>
</dbReference>
<dbReference type="PRO" id="PR:O54818"/>
<dbReference type="Proteomes" id="UP000000589">
    <property type="component" value="Chromosome 10"/>
</dbReference>
<dbReference type="RNAct" id="O54818">
    <property type="molecule type" value="protein"/>
</dbReference>
<dbReference type="Bgee" id="ENSMUSG00000000296">
    <property type="expression patterns" value="Expressed in seminal vesicle and 250 other cell types or tissues"/>
</dbReference>
<dbReference type="ExpressionAtlas" id="O54818">
    <property type="expression patterns" value="baseline and differential"/>
</dbReference>
<dbReference type="GO" id="GO:0005737">
    <property type="term" value="C:cytoplasm"/>
    <property type="evidence" value="ECO:0000250"/>
    <property type="project" value="UniProtKB"/>
</dbReference>
<dbReference type="GO" id="GO:0005769">
    <property type="term" value="C:early endosome"/>
    <property type="evidence" value="ECO:0000266"/>
    <property type="project" value="MGI"/>
</dbReference>
<dbReference type="GO" id="GO:0048471">
    <property type="term" value="C:perinuclear region of cytoplasm"/>
    <property type="evidence" value="ECO:0000250"/>
    <property type="project" value="UniProtKB"/>
</dbReference>
<dbReference type="GO" id="GO:0042803">
    <property type="term" value="F:protein homodimerization activity"/>
    <property type="evidence" value="ECO:0000250"/>
    <property type="project" value="UniProtKB"/>
</dbReference>
<dbReference type="GO" id="GO:0000086">
    <property type="term" value="P:G2/M transition of mitotic cell cycle"/>
    <property type="evidence" value="ECO:0000250"/>
    <property type="project" value="UniProtKB"/>
</dbReference>
<dbReference type="InterPro" id="IPR007327">
    <property type="entry name" value="TPD52"/>
</dbReference>
<dbReference type="PANTHER" id="PTHR19307">
    <property type="entry name" value="TUMOR PROTEIN D52"/>
    <property type="match status" value="1"/>
</dbReference>
<dbReference type="PANTHER" id="PTHR19307:SF8">
    <property type="entry name" value="TUMOR PROTEIN D53"/>
    <property type="match status" value="1"/>
</dbReference>
<dbReference type="Pfam" id="PF04201">
    <property type="entry name" value="TPD52"/>
    <property type="match status" value="1"/>
</dbReference>
<keyword id="KW-0175">Coiled coil</keyword>
<keyword id="KW-0488">Methylation</keyword>
<keyword id="KW-0597">Phosphoprotein</keyword>
<keyword id="KW-1185">Reference proteome</keyword>
<feature type="chain" id="PRO_0000185742" description="Tumor protein D53">
    <location>
        <begin position="1"/>
        <end position="204"/>
    </location>
</feature>
<feature type="region of interest" description="Disordered" evidence="4">
    <location>
        <begin position="1"/>
        <end position="31"/>
    </location>
</feature>
<feature type="region of interest" description="Disordered" evidence="4">
    <location>
        <begin position="164"/>
        <end position="204"/>
    </location>
</feature>
<feature type="coiled-coil region" evidence="3">
    <location>
        <begin position="22"/>
        <end position="73"/>
    </location>
</feature>
<feature type="compositionally biased region" description="Polar residues" evidence="4">
    <location>
        <begin position="179"/>
        <end position="195"/>
    </location>
</feature>
<feature type="modified residue" description="Phosphoserine" evidence="2">
    <location>
        <position position="29"/>
    </location>
</feature>
<feature type="modified residue" description="Phosphoserine" evidence="2">
    <location>
        <position position="86"/>
    </location>
</feature>
<feature type="modified residue" description="Phosphoserine" evidence="2">
    <location>
        <position position="122"/>
    </location>
</feature>
<feature type="modified residue" description="Phosphoserine" evidence="2">
    <location>
        <position position="131"/>
    </location>
</feature>
<feature type="modified residue" description="Omega-N-methylarginine" evidence="2">
    <location>
        <position position="133"/>
    </location>
</feature>
<feature type="modified residue" description="Phosphothreonine" evidence="2">
    <location>
        <position position="146"/>
    </location>
</feature>
<feature type="modified residue" description="Phosphoserine" evidence="2">
    <location>
        <position position="149"/>
    </location>
</feature>
<feature type="modified residue" description="Phosphoserine" evidence="2">
    <location>
        <position position="174"/>
    </location>
</feature>